<reference key="1">
    <citation type="journal article" date="2002" name="Proc. Natl. Acad. Sci. U.S.A.">
        <title>Complete genome sequence of Clostridium perfringens, an anaerobic flesh-eater.</title>
        <authorList>
            <person name="Shimizu T."/>
            <person name="Ohtani K."/>
            <person name="Hirakawa H."/>
            <person name="Ohshima K."/>
            <person name="Yamashita A."/>
            <person name="Shiba T."/>
            <person name="Ogasawara N."/>
            <person name="Hattori M."/>
            <person name="Kuhara S."/>
            <person name="Hayashi H."/>
        </authorList>
    </citation>
    <scope>NUCLEOTIDE SEQUENCE [LARGE SCALE GENOMIC DNA]</scope>
    <source>
        <strain>13 / Type A</strain>
    </source>
</reference>
<evidence type="ECO:0000255" key="1">
    <source>
        <dbReference type="PROSITE-ProRule" id="PRU00159"/>
    </source>
</evidence>
<evidence type="ECO:0000255" key="2">
    <source>
        <dbReference type="PROSITE-ProRule" id="PRU00528"/>
    </source>
</evidence>
<evidence type="ECO:0000255" key="3">
    <source>
        <dbReference type="PROSITE-ProRule" id="PRU10027"/>
    </source>
</evidence>
<evidence type="ECO:0000256" key="4">
    <source>
        <dbReference type="SAM" id="MobiDB-lite"/>
    </source>
</evidence>
<proteinExistence type="inferred from homology"/>
<accession>Q8XJL8</accession>
<gene>
    <name type="ordered locus">CPE1738</name>
</gene>
<comment type="catalytic activity">
    <reaction>
        <text>L-seryl-[protein] + ATP = O-phospho-L-seryl-[protein] + ADP + H(+)</text>
        <dbReference type="Rhea" id="RHEA:17989"/>
        <dbReference type="Rhea" id="RHEA-COMP:9863"/>
        <dbReference type="Rhea" id="RHEA-COMP:11604"/>
        <dbReference type="ChEBI" id="CHEBI:15378"/>
        <dbReference type="ChEBI" id="CHEBI:29999"/>
        <dbReference type="ChEBI" id="CHEBI:30616"/>
        <dbReference type="ChEBI" id="CHEBI:83421"/>
        <dbReference type="ChEBI" id="CHEBI:456216"/>
        <dbReference type="EC" id="2.7.11.1"/>
    </reaction>
</comment>
<comment type="catalytic activity">
    <reaction>
        <text>L-threonyl-[protein] + ATP = O-phospho-L-threonyl-[protein] + ADP + H(+)</text>
        <dbReference type="Rhea" id="RHEA:46608"/>
        <dbReference type="Rhea" id="RHEA-COMP:11060"/>
        <dbReference type="Rhea" id="RHEA-COMP:11605"/>
        <dbReference type="ChEBI" id="CHEBI:15378"/>
        <dbReference type="ChEBI" id="CHEBI:30013"/>
        <dbReference type="ChEBI" id="CHEBI:30616"/>
        <dbReference type="ChEBI" id="CHEBI:61977"/>
        <dbReference type="ChEBI" id="CHEBI:456216"/>
        <dbReference type="EC" id="2.7.11.1"/>
    </reaction>
</comment>
<comment type="similarity">
    <text evidence="1">Belongs to the protein kinase superfamily. Ser/Thr protein kinase family.</text>
</comment>
<sequence>MIGKILGNRYELLQCVGEGGMSFVYKARCRKLNRFVAVKILKDEFKNNEEIVRRFKKEATAIANLSNPNVVNVLDVGTQDDINYIVMEYVEGKTLKDIIKEKGALPYEVAISIGIKVAKALECAHKSGIIHRDVKPQNILVTEEGVVKVTDFGIAKSMDSSTIAHTNSVMGSAHYFSPEQAKGTYTDYRTDLYSLGIVLYEMVTGVVPFNGDSPVTVAVKHIQEKAIPPKNINQNIPNSLNDLIMKAMEKDPVNRYQTAKEIIGDLEKIKKDPNVTISSKSAEDEDQFTRVMSPVVVPNTETNNSEPDEDDEDDDEYYEDDEDEDEEENNIQTKPQKAINKNKKKSPILIIIATILVVALGITLGFLGMKKFMEGGKDVKIPNVVGEKVEDAKSKLEGLGLKVLEVTEESDQEKGIVLKVDPNVDSTVKTGSEVKLTVSGGEGQIKVPNFAEMNLDSVKRTLKSLGLELGSVDEEYSDSVPRGEVISQSPNANESVDKGSKVNVTISKGKEIKSETINIPDVSGKSVEEAKSILANAGVGVNPVKGEAAKSEGEAGKVYSQSQSGSLTIKQGEKVTITINYYGDYVKPEKPKHNAGELVGMTGAQAKAWASKNKINVSGITSDTAKVKSVSNSGEVEEGGSVSVTMEEEKKPEQPTQPNQPTQPTQPNQQAQPEQPKQPEQSGNN</sequence>
<keyword id="KW-0067">ATP-binding</keyword>
<keyword id="KW-0418">Kinase</keyword>
<keyword id="KW-0547">Nucleotide-binding</keyword>
<keyword id="KW-1185">Reference proteome</keyword>
<keyword id="KW-0677">Repeat</keyword>
<keyword id="KW-0723">Serine/threonine-protein kinase</keyword>
<keyword id="KW-0808">Transferase</keyword>
<feature type="chain" id="PRO_0000171195" description="Probable serine/threonine-protein kinase CPE1738">
    <location>
        <begin position="1"/>
        <end position="685"/>
    </location>
</feature>
<feature type="domain" description="Protein kinase" evidence="1">
    <location>
        <begin position="10"/>
        <end position="275"/>
    </location>
</feature>
<feature type="domain" description="PASTA 1" evidence="2">
    <location>
        <begin position="376"/>
        <end position="440"/>
    </location>
</feature>
<feature type="domain" description="PASTA 2" evidence="2">
    <location>
        <begin position="441"/>
        <end position="508"/>
    </location>
</feature>
<feature type="domain" description="PASTA 3" evidence="2">
    <location>
        <begin position="513"/>
        <end position="581"/>
    </location>
</feature>
<feature type="domain" description="PASTA 4" evidence="2">
    <location>
        <begin position="589"/>
        <end position="648"/>
    </location>
</feature>
<feature type="region of interest" description="Disordered" evidence="4">
    <location>
        <begin position="277"/>
        <end position="339"/>
    </location>
</feature>
<feature type="region of interest" description="Disordered" evidence="4">
    <location>
        <begin position="480"/>
        <end position="500"/>
    </location>
</feature>
<feature type="region of interest" description="Disordered" evidence="4">
    <location>
        <begin position="623"/>
        <end position="685"/>
    </location>
</feature>
<feature type="compositionally biased region" description="Acidic residues" evidence="4">
    <location>
        <begin position="306"/>
        <end position="329"/>
    </location>
</feature>
<feature type="compositionally biased region" description="Low complexity" evidence="4">
    <location>
        <begin position="627"/>
        <end position="645"/>
    </location>
</feature>
<feature type="compositionally biased region" description="Low complexity" evidence="4">
    <location>
        <begin position="654"/>
        <end position="685"/>
    </location>
</feature>
<feature type="active site" description="Proton acceptor" evidence="1 3">
    <location>
        <position position="143"/>
    </location>
</feature>
<feature type="binding site" evidence="1">
    <location>
        <begin position="16"/>
        <end position="24"/>
    </location>
    <ligand>
        <name>ATP</name>
        <dbReference type="ChEBI" id="CHEBI:30616"/>
    </ligand>
</feature>
<feature type="binding site" evidence="1">
    <location>
        <position position="39"/>
    </location>
    <ligand>
        <name>ATP</name>
        <dbReference type="ChEBI" id="CHEBI:30616"/>
    </ligand>
</feature>
<name>PKN2_CLOPE</name>
<dbReference type="EC" id="2.7.11.1"/>
<dbReference type="EMBL" id="BA000016">
    <property type="protein sequence ID" value="BAB81444.1"/>
    <property type="molecule type" value="Genomic_DNA"/>
</dbReference>
<dbReference type="RefSeq" id="WP_004458146.1">
    <property type="nucleotide sequence ID" value="NC_003366.1"/>
</dbReference>
<dbReference type="SMR" id="Q8XJL8"/>
<dbReference type="STRING" id="195102.gene:10491002"/>
<dbReference type="KEGG" id="cpe:CPE1738"/>
<dbReference type="HOGENOM" id="CLU_000288_135_2_9"/>
<dbReference type="Proteomes" id="UP000000818">
    <property type="component" value="Chromosome"/>
</dbReference>
<dbReference type="GO" id="GO:0005524">
    <property type="term" value="F:ATP binding"/>
    <property type="evidence" value="ECO:0007669"/>
    <property type="project" value="UniProtKB-KW"/>
</dbReference>
<dbReference type="GO" id="GO:0106310">
    <property type="term" value="F:protein serine kinase activity"/>
    <property type="evidence" value="ECO:0007669"/>
    <property type="project" value="RHEA"/>
</dbReference>
<dbReference type="GO" id="GO:0004674">
    <property type="term" value="F:protein serine/threonine kinase activity"/>
    <property type="evidence" value="ECO:0007669"/>
    <property type="project" value="UniProtKB-KW"/>
</dbReference>
<dbReference type="CDD" id="cd06577">
    <property type="entry name" value="PASTA_pknB"/>
    <property type="match status" value="3"/>
</dbReference>
<dbReference type="CDD" id="cd14014">
    <property type="entry name" value="STKc_PknB_like"/>
    <property type="match status" value="1"/>
</dbReference>
<dbReference type="FunFam" id="1.10.510.10:FF:000021">
    <property type="entry name" value="Serine/threonine protein kinase"/>
    <property type="match status" value="1"/>
</dbReference>
<dbReference type="Gene3D" id="3.30.10.20">
    <property type="match status" value="3"/>
</dbReference>
<dbReference type="Gene3D" id="3.30.200.20">
    <property type="entry name" value="Phosphorylase Kinase, domain 1"/>
    <property type="match status" value="1"/>
</dbReference>
<dbReference type="Gene3D" id="1.10.510.10">
    <property type="entry name" value="Transferase(Phosphotransferase) domain 1"/>
    <property type="match status" value="1"/>
</dbReference>
<dbReference type="InterPro" id="IPR011009">
    <property type="entry name" value="Kinase-like_dom_sf"/>
</dbReference>
<dbReference type="InterPro" id="IPR005543">
    <property type="entry name" value="PASTA_dom"/>
</dbReference>
<dbReference type="InterPro" id="IPR000719">
    <property type="entry name" value="Prot_kinase_dom"/>
</dbReference>
<dbReference type="InterPro" id="IPR017441">
    <property type="entry name" value="Protein_kinase_ATP_BS"/>
</dbReference>
<dbReference type="InterPro" id="IPR008271">
    <property type="entry name" value="Ser/Thr_kinase_AS"/>
</dbReference>
<dbReference type="NCBIfam" id="NF033483">
    <property type="entry name" value="PknB_PASTA_kin"/>
    <property type="match status" value="1"/>
</dbReference>
<dbReference type="PANTHER" id="PTHR43289">
    <property type="entry name" value="MITOGEN-ACTIVATED PROTEIN KINASE KINASE KINASE 20-RELATED"/>
    <property type="match status" value="1"/>
</dbReference>
<dbReference type="PANTHER" id="PTHR43289:SF34">
    <property type="entry name" value="SERINE_THREONINE-PROTEIN KINASE YBDM-RELATED"/>
    <property type="match status" value="1"/>
</dbReference>
<dbReference type="Pfam" id="PF03793">
    <property type="entry name" value="PASTA"/>
    <property type="match status" value="3"/>
</dbReference>
<dbReference type="Pfam" id="PF00069">
    <property type="entry name" value="Pkinase"/>
    <property type="match status" value="1"/>
</dbReference>
<dbReference type="SMART" id="SM00740">
    <property type="entry name" value="PASTA"/>
    <property type="match status" value="4"/>
</dbReference>
<dbReference type="SMART" id="SM00220">
    <property type="entry name" value="S_TKc"/>
    <property type="match status" value="1"/>
</dbReference>
<dbReference type="SUPFAM" id="SSF56112">
    <property type="entry name" value="Protein kinase-like (PK-like)"/>
    <property type="match status" value="1"/>
</dbReference>
<dbReference type="PROSITE" id="PS51178">
    <property type="entry name" value="PASTA"/>
    <property type="match status" value="4"/>
</dbReference>
<dbReference type="PROSITE" id="PS00107">
    <property type="entry name" value="PROTEIN_KINASE_ATP"/>
    <property type="match status" value="1"/>
</dbReference>
<dbReference type="PROSITE" id="PS50011">
    <property type="entry name" value="PROTEIN_KINASE_DOM"/>
    <property type="match status" value="1"/>
</dbReference>
<dbReference type="PROSITE" id="PS00108">
    <property type="entry name" value="PROTEIN_KINASE_ST"/>
    <property type="match status" value="1"/>
</dbReference>
<protein>
    <recommendedName>
        <fullName>Probable serine/threonine-protein kinase CPE1738</fullName>
        <ecNumber>2.7.11.1</ecNumber>
    </recommendedName>
</protein>
<organism>
    <name type="scientific">Clostridium perfringens (strain 13 / Type A)</name>
    <dbReference type="NCBI Taxonomy" id="195102"/>
    <lineage>
        <taxon>Bacteria</taxon>
        <taxon>Bacillati</taxon>
        <taxon>Bacillota</taxon>
        <taxon>Clostridia</taxon>
        <taxon>Eubacteriales</taxon>
        <taxon>Clostridiaceae</taxon>
        <taxon>Clostridium</taxon>
    </lineage>
</organism>